<sequence>MFDIGVNLTSSQFSRDHDEVVARARAAGVHGMLLTGTNLPESQQAQRMASHYSGCWSTAGVHPHDGSSWSPAVAEAIYTLAREPQVVAIGECGLDFNRNFSTPQEQEAAFSAQLALAAELAMPVFLHCRDAHDRFLALLKPWLEKIPGAVLHCFTGSRSEVQECLDLGLFIGITGWVCDERRGLELRELLPAIPAERLLLETDAPYLLPRDLKPRPASRRNEPAYLPHILASVASWRGEETQWLEAQTDANVRTLFGIDVNGV</sequence>
<comment type="function">
    <text evidence="1">3'-5' exonuclease that prefers single-stranded DNA and RNA. May play a role in the H(2)O(2)-induced DNA damage repair.</text>
</comment>
<comment type="cofactor">
    <cofactor evidence="1">
        <name>Mg(2+)</name>
        <dbReference type="ChEBI" id="CHEBI:18420"/>
    </cofactor>
</comment>
<comment type="subunit">
    <text evidence="1">Monomer.</text>
</comment>
<comment type="subcellular location">
    <subcellularLocation>
        <location evidence="1">Cytoplasm</location>
    </subcellularLocation>
</comment>
<comment type="similarity">
    <text evidence="1">Belongs to the metallo-dependent hydrolases superfamily. TatD-type hydrolase family. TatD subfamily.</text>
</comment>
<gene>
    <name evidence="1" type="primary">tatD</name>
    <name type="ordered locus">KPK_5337</name>
</gene>
<evidence type="ECO:0000255" key="1">
    <source>
        <dbReference type="HAMAP-Rule" id="MF_00901"/>
    </source>
</evidence>
<protein>
    <recommendedName>
        <fullName evidence="1">3'-5' ssDNA/RNA exonuclease TatD</fullName>
        <ecNumber evidence="1">3.1.11.-</ecNumber>
        <ecNumber evidence="1">3.1.13.-</ecNumber>
    </recommendedName>
    <alternativeName>
        <fullName evidence="1">DNase TatD</fullName>
    </alternativeName>
</protein>
<reference key="1">
    <citation type="journal article" date="2008" name="PLoS Genet.">
        <title>Complete genome sequence of the N2-fixing broad host range endophyte Klebsiella pneumoniae 342 and virulence predictions verified in mice.</title>
        <authorList>
            <person name="Fouts D.E."/>
            <person name="Tyler H.L."/>
            <person name="DeBoy R.T."/>
            <person name="Daugherty S."/>
            <person name="Ren Q."/>
            <person name="Badger J.H."/>
            <person name="Durkin A.S."/>
            <person name="Huot H."/>
            <person name="Shrivastava S."/>
            <person name="Kothari S."/>
            <person name="Dodson R.J."/>
            <person name="Mohamoud Y."/>
            <person name="Khouri H."/>
            <person name="Roesch L.F.W."/>
            <person name="Krogfelt K.A."/>
            <person name="Struve C."/>
            <person name="Triplett E.W."/>
            <person name="Methe B.A."/>
        </authorList>
    </citation>
    <scope>NUCLEOTIDE SEQUENCE [LARGE SCALE GENOMIC DNA]</scope>
    <source>
        <strain>342</strain>
    </source>
</reference>
<proteinExistence type="inferred from homology"/>
<name>TATD_KLEP3</name>
<keyword id="KW-0963">Cytoplasm</keyword>
<keyword id="KW-0269">Exonuclease</keyword>
<keyword id="KW-0378">Hydrolase</keyword>
<keyword id="KW-0460">Magnesium</keyword>
<keyword id="KW-0479">Metal-binding</keyword>
<keyword id="KW-0540">Nuclease</keyword>
<feature type="chain" id="PRO_0000412744" description="3'-5' ssDNA/RNA exonuclease TatD">
    <location>
        <begin position="1"/>
        <end position="263"/>
    </location>
</feature>
<feature type="binding site" evidence="1">
    <location>
        <position position="91"/>
    </location>
    <ligand>
        <name>a divalent metal cation</name>
        <dbReference type="ChEBI" id="CHEBI:60240"/>
    </ligand>
</feature>
<feature type="binding site" evidence="1">
    <location>
        <position position="127"/>
    </location>
    <ligand>
        <name>a divalent metal cation</name>
        <dbReference type="ChEBI" id="CHEBI:60240"/>
    </ligand>
</feature>
<feature type="binding site" evidence="1">
    <location>
        <position position="152"/>
    </location>
    <ligand>
        <name>a divalent metal cation</name>
        <dbReference type="ChEBI" id="CHEBI:60240"/>
    </ligand>
</feature>
<dbReference type="EC" id="3.1.11.-" evidence="1"/>
<dbReference type="EC" id="3.1.13.-" evidence="1"/>
<dbReference type="EMBL" id="CP000964">
    <property type="protein sequence ID" value="ACI10303.1"/>
    <property type="molecule type" value="Genomic_DNA"/>
</dbReference>
<dbReference type="SMR" id="B5XYH5"/>
<dbReference type="KEGG" id="kpe:KPK_5337"/>
<dbReference type="HOGENOM" id="CLU_031506_1_2_6"/>
<dbReference type="Proteomes" id="UP000001734">
    <property type="component" value="Chromosome"/>
</dbReference>
<dbReference type="GO" id="GO:0005829">
    <property type="term" value="C:cytosol"/>
    <property type="evidence" value="ECO:0007669"/>
    <property type="project" value="TreeGrafter"/>
</dbReference>
<dbReference type="GO" id="GO:0000175">
    <property type="term" value="F:3'-5'-RNA exonuclease activity"/>
    <property type="evidence" value="ECO:0007669"/>
    <property type="project" value="UniProtKB-UniRule"/>
</dbReference>
<dbReference type="GO" id="GO:0000287">
    <property type="term" value="F:magnesium ion binding"/>
    <property type="evidence" value="ECO:0007669"/>
    <property type="project" value="UniProtKB-UniRule"/>
</dbReference>
<dbReference type="GO" id="GO:0008310">
    <property type="term" value="F:single-stranded DNA 3'-5' DNA exonuclease activity"/>
    <property type="evidence" value="ECO:0007669"/>
    <property type="project" value="UniProtKB-UniRule"/>
</dbReference>
<dbReference type="CDD" id="cd01310">
    <property type="entry name" value="TatD_DNAse"/>
    <property type="match status" value="1"/>
</dbReference>
<dbReference type="FunFam" id="3.20.20.140:FF:000018">
    <property type="entry name" value="3'-5' ssDNA/RNA exonuclease TatD"/>
    <property type="match status" value="1"/>
</dbReference>
<dbReference type="Gene3D" id="3.20.20.140">
    <property type="entry name" value="Metal-dependent hydrolases"/>
    <property type="match status" value="1"/>
</dbReference>
<dbReference type="HAMAP" id="MF_00901">
    <property type="entry name" value="TatD_exonuclease"/>
    <property type="match status" value="1"/>
</dbReference>
<dbReference type="InterPro" id="IPR018228">
    <property type="entry name" value="DNase_TatD-rel_CS"/>
</dbReference>
<dbReference type="InterPro" id="IPR024918">
    <property type="entry name" value="Exonuc_TatD"/>
</dbReference>
<dbReference type="InterPro" id="IPR032466">
    <property type="entry name" value="Metal_Hydrolase"/>
</dbReference>
<dbReference type="InterPro" id="IPR001130">
    <property type="entry name" value="TatD-like"/>
</dbReference>
<dbReference type="NCBIfam" id="NF007745">
    <property type="entry name" value="PRK10425.1"/>
    <property type="match status" value="1"/>
</dbReference>
<dbReference type="PANTHER" id="PTHR46124">
    <property type="entry name" value="D-AMINOACYL-TRNA DEACYLASE"/>
    <property type="match status" value="1"/>
</dbReference>
<dbReference type="PANTHER" id="PTHR46124:SF2">
    <property type="entry name" value="D-AMINOACYL-TRNA DEACYLASE"/>
    <property type="match status" value="1"/>
</dbReference>
<dbReference type="Pfam" id="PF01026">
    <property type="entry name" value="TatD_DNase"/>
    <property type="match status" value="1"/>
</dbReference>
<dbReference type="PIRSF" id="PIRSF005902">
    <property type="entry name" value="DNase_TatD"/>
    <property type="match status" value="1"/>
</dbReference>
<dbReference type="SUPFAM" id="SSF51556">
    <property type="entry name" value="Metallo-dependent hydrolases"/>
    <property type="match status" value="1"/>
</dbReference>
<dbReference type="PROSITE" id="PS01090">
    <property type="entry name" value="TATD_2"/>
    <property type="match status" value="1"/>
</dbReference>
<dbReference type="PROSITE" id="PS01091">
    <property type="entry name" value="TATD_3"/>
    <property type="match status" value="1"/>
</dbReference>
<accession>B5XYH5</accession>
<organism>
    <name type="scientific">Klebsiella pneumoniae (strain 342)</name>
    <dbReference type="NCBI Taxonomy" id="507522"/>
    <lineage>
        <taxon>Bacteria</taxon>
        <taxon>Pseudomonadati</taxon>
        <taxon>Pseudomonadota</taxon>
        <taxon>Gammaproteobacteria</taxon>
        <taxon>Enterobacterales</taxon>
        <taxon>Enterobacteriaceae</taxon>
        <taxon>Klebsiella/Raoultella group</taxon>
        <taxon>Klebsiella</taxon>
        <taxon>Klebsiella pneumoniae complex</taxon>
    </lineage>
</organism>